<evidence type="ECO:0000255" key="1">
    <source>
        <dbReference type="HAMAP-Rule" id="MF_00260"/>
    </source>
</evidence>
<sequence>MKRKIIVGSRRSKLALTQSNWVINKLKENYPAFDFEIKEIVTKGDRILDVTLSKVGGKGLFVSEVEQALSDKTIDFAVHSMKDVPSSLKEGLVIGAIPKRESPLDCFVFNQVNALDELPHGSVIGTSSLRRAAQLLKHRPDFVIKPIRGNIDTRLQKLHAENFDAIILAKAGLARMGWLENTTLKLEDIPPELCLPAVGQGALAIECRESDQQIRDMLTSIHHEETGICVEAERVFLKKLNGGCEIPIAGFATKANEAVHFKGLVGNADGSIILEAEQTGANPSEIGNKVAEDLLSKGADTIIQELRNI</sequence>
<dbReference type="EC" id="2.5.1.61" evidence="1"/>
<dbReference type="EMBL" id="CP001175">
    <property type="protein sequence ID" value="ACK39361.1"/>
    <property type="molecule type" value="Genomic_DNA"/>
</dbReference>
<dbReference type="RefSeq" id="WP_003730231.1">
    <property type="nucleotide sequence ID" value="NC_011660.1"/>
</dbReference>
<dbReference type="SMR" id="B8DHJ2"/>
<dbReference type="KEGG" id="lmh:LMHCC_1013"/>
<dbReference type="HOGENOM" id="CLU_019704_0_2_9"/>
<dbReference type="UniPathway" id="UPA00251">
    <property type="reaction ID" value="UER00319"/>
</dbReference>
<dbReference type="GO" id="GO:0005737">
    <property type="term" value="C:cytoplasm"/>
    <property type="evidence" value="ECO:0007669"/>
    <property type="project" value="TreeGrafter"/>
</dbReference>
<dbReference type="GO" id="GO:0004418">
    <property type="term" value="F:hydroxymethylbilane synthase activity"/>
    <property type="evidence" value="ECO:0007669"/>
    <property type="project" value="UniProtKB-UniRule"/>
</dbReference>
<dbReference type="GO" id="GO:0006782">
    <property type="term" value="P:protoporphyrinogen IX biosynthetic process"/>
    <property type="evidence" value="ECO:0007669"/>
    <property type="project" value="UniProtKB-UniRule"/>
</dbReference>
<dbReference type="CDD" id="cd13646">
    <property type="entry name" value="PBP2_EcHMBS_like"/>
    <property type="match status" value="1"/>
</dbReference>
<dbReference type="FunFam" id="3.30.160.40:FF:000001">
    <property type="entry name" value="Porphobilinogen deaminase"/>
    <property type="match status" value="1"/>
</dbReference>
<dbReference type="FunFam" id="3.40.190.10:FF:000004">
    <property type="entry name" value="Porphobilinogen deaminase"/>
    <property type="match status" value="1"/>
</dbReference>
<dbReference type="FunFam" id="3.40.190.10:FF:000005">
    <property type="entry name" value="Porphobilinogen deaminase"/>
    <property type="match status" value="1"/>
</dbReference>
<dbReference type="Gene3D" id="3.40.190.10">
    <property type="entry name" value="Periplasmic binding protein-like II"/>
    <property type="match status" value="2"/>
</dbReference>
<dbReference type="Gene3D" id="3.30.160.40">
    <property type="entry name" value="Porphobilinogen deaminase, C-terminal domain"/>
    <property type="match status" value="1"/>
</dbReference>
<dbReference type="HAMAP" id="MF_00260">
    <property type="entry name" value="Porphobil_deam"/>
    <property type="match status" value="1"/>
</dbReference>
<dbReference type="InterPro" id="IPR000860">
    <property type="entry name" value="HemC"/>
</dbReference>
<dbReference type="InterPro" id="IPR022419">
    <property type="entry name" value="Porphobilin_deaminase_cofac_BS"/>
</dbReference>
<dbReference type="InterPro" id="IPR022417">
    <property type="entry name" value="Porphobilin_deaminase_N"/>
</dbReference>
<dbReference type="InterPro" id="IPR022418">
    <property type="entry name" value="Porphobilinogen_deaminase_C"/>
</dbReference>
<dbReference type="InterPro" id="IPR036803">
    <property type="entry name" value="Porphobilinogen_deaminase_C_sf"/>
</dbReference>
<dbReference type="NCBIfam" id="TIGR00212">
    <property type="entry name" value="hemC"/>
    <property type="match status" value="1"/>
</dbReference>
<dbReference type="PANTHER" id="PTHR11557">
    <property type="entry name" value="PORPHOBILINOGEN DEAMINASE"/>
    <property type="match status" value="1"/>
</dbReference>
<dbReference type="PANTHER" id="PTHR11557:SF0">
    <property type="entry name" value="PORPHOBILINOGEN DEAMINASE"/>
    <property type="match status" value="1"/>
</dbReference>
<dbReference type="Pfam" id="PF01379">
    <property type="entry name" value="Porphobil_deam"/>
    <property type="match status" value="1"/>
</dbReference>
<dbReference type="Pfam" id="PF03900">
    <property type="entry name" value="Porphobil_deamC"/>
    <property type="match status" value="1"/>
</dbReference>
<dbReference type="PIRSF" id="PIRSF001438">
    <property type="entry name" value="4pyrrol_synth_OHMeBilane_synth"/>
    <property type="match status" value="1"/>
</dbReference>
<dbReference type="PRINTS" id="PR00151">
    <property type="entry name" value="PORPHBDMNASE"/>
</dbReference>
<dbReference type="SUPFAM" id="SSF53850">
    <property type="entry name" value="Periplasmic binding protein-like II"/>
    <property type="match status" value="1"/>
</dbReference>
<dbReference type="SUPFAM" id="SSF54782">
    <property type="entry name" value="Porphobilinogen deaminase (hydroxymethylbilane synthase), C-terminal domain"/>
    <property type="match status" value="1"/>
</dbReference>
<dbReference type="PROSITE" id="PS00533">
    <property type="entry name" value="PORPHOBILINOGEN_DEAM"/>
    <property type="match status" value="1"/>
</dbReference>
<keyword id="KW-0627">Porphyrin biosynthesis</keyword>
<keyword id="KW-0808">Transferase</keyword>
<reference key="1">
    <citation type="journal article" date="2011" name="J. Bacteriol.">
        <title>Genome sequence of lineage III Listeria monocytogenes strain HCC23.</title>
        <authorList>
            <person name="Steele C.L."/>
            <person name="Donaldson J.R."/>
            <person name="Paul D."/>
            <person name="Banes M.M."/>
            <person name="Arick T."/>
            <person name="Bridges S.M."/>
            <person name="Lawrence M.L."/>
        </authorList>
    </citation>
    <scope>NUCLEOTIDE SEQUENCE [LARGE SCALE GENOMIC DNA]</scope>
    <source>
        <strain>HCC23</strain>
    </source>
</reference>
<comment type="function">
    <text evidence="1">Tetrapolymerization of the monopyrrole PBG into the hydroxymethylbilane pre-uroporphyrinogen in several discrete steps.</text>
</comment>
<comment type="catalytic activity">
    <reaction evidence="1">
        <text>4 porphobilinogen + H2O = hydroxymethylbilane + 4 NH4(+)</text>
        <dbReference type="Rhea" id="RHEA:13185"/>
        <dbReference type="ChEBI" id="CHEBI:15377"/>
        <dbReference type="ChEBI" id="CHEBI:28938"/>
        <dbReference type="ChEBI" id="CHEBI:57845"/>
        <dbReference type="ChEBI" id="CHEBI:58126"/>
        <dbReference type="EC" id="2.5.1.61"/>
    </reaction>
</comment>
<comment type="cofactor">
    <cofactor evidence="1">
        <name>dipyrromethane</name>
        <dbReference type="ChEBI" id="CHEBI:60342"/>
    </cofactor>
    <text evidence="1">Binds 1 dipyrromethane group covalently.</text>
</comment>
<comment type="pathway">
    <text evidence="1">Porphyrin-containing compound metabolism; protoporphyrin-IX biosynthesis; coproporphyrinogen-III from 5-aminolevulinate: step 2/4.</text>
</comment>
<comment type="subunit">
    <text evidence="1">Monomer.</text>
</comment>
<comment type="miscellaneous">
    <text evidence="1">The porphobilinogen subunits are added to the dipyrromethane group.</text>
</comment>
<comment type="similarity">
    <text evidence="1">Belongs to the HMBS family.</text>
</comment>
<gene>
    <name evidence="1" type="primary">hemC</name>
    <name type="ordered locus">LMHCC_1013</name>
</gene>
<name>HEM3_LISMH</name>
<feature type="chain" id="PRO_1000125675" description="Porphobilinogen deaminase">
    <location>
        <begin position="1"/>
        <end position="309"/>
    </location>
</feature>
<feature type="modified residue" description="S-(dipyrrolylmethanemethyl)cysteine" evidence="1">
    <location>
        <position position="244"/>
    </location>
</feature>
<proteinExistence type="inferred from homology"/>
<accession>B8DHJ2</accession>
<organism>
    <name type="scientific">Listeria monocytogenes serotype 4a (strain HCC23)</name>
    <dbReference type="NCBI Taxonomy" id="552536"/>
    <lineage>
        <taxon>Bacteria</taxon>
        <taxon>Bacillati</taxon>
        <taxon>Bacillota</taxon>
        <taxon>Bacilli</taxon>
        <taxon>Bacillales</taxon>
        <taxon>Listeriaceae</taxon>
        <taxon>Listeria</taxon>
    </lineage>
</organism>
<protein>
    <recommendedName>
        <fullName evidence="1">Porphobilinogen deaminase</fullName>
        <shortName evidence="1">PBG</shortName>
        <ecNumber evidence="1">2.5.1.61</ecNumber>
    </recommendedName>
    <alternativeName>
        <fullName evidence="1">Hydroxymethylbilane synthase</fullName>
        <shortName evidence="1">HMBS</shortName>
    </alternativeName>
    <alternativeName>
        <fullName evidence="1">Pre-uroporphyrinogen synthase</fullName>
    </alternativeName>
</protein>